<name>DNAA_GEODF</name>
<feature type="chain" id="PRO_1000189798" description="Chromosomal replication initiator protein DnaA">
    <location>
        <begin position="1"/>
        <end position="445"/>
    </location>
</feature>
<feature type="region of interest" description="Domain I, interacts with DnaA modulators" evidence="1">
    <location>
        <begin position="1"/>
        <end position="69"/>
    </location>
</feature>
<feature type="region of interest" description="Domain II" evidence="1">
    <location>
        <begin position="69"/>
        <end position="108"/>
    </location>
</feature>
<feature type="region of interest" description="Domain III, AAA+ region" evidence="1">
    <location>
        <begin position="109"/>
        <end position="325"/>
    </location>
</feature>
<feature type="region of interest" description="Domain IV, binds dsDNA" evidence="1">
    <location>
        <begin position="326"/>
        <end position="445"/>
    </location>
</feature>
<feature type="binding site" evidence="1">
    <location>
        <position position="153"/>
    </location>
    <ligand>
        <name>ATP</name>
        <dbReference type="ChEBI" id="CHEBI:30616"/>
    </ligand>
</feature>
<feature type="binding site" evidence="1">
    <location>
        <position position="155"/>
    </location>
    <ligand>
        <name>ATP</name>
        <dbReference type="ChEBI" id="CHEBI:30616"/>
    </ligand>
</feature>
<feature type="binding site" evidence="1">
    <location>
        <position position="156"/>
    </location>
    <ligand>
        <name>ATP</name>
        <dbReference type="ChEBI" id="CHEBI:30616"/>
    </ligand>
</feature>
<feature type="binding site" evidence="1">
    <location>
        <position position="157"/>
    </location>
    <ligand>
        <name>ATP</name>
        <dbReference type="ChEBI" id="CHEBI:30616"/>
    </ligand>
</feature>
<sequence length="445" mass="51122">MEKIWLEAQSNIKKVLTPQTYNTWIKPIHFHNVSDTNLTLEVPSKFIKEWVTEKYLSIIIEAISSLTNIKYQVDFKITEKSQVEKKKVDLQATEKIENDSTRNVDFNTNLNPKYTFDSFVCGASNQFAHAASQAVANNPACNYNPLFIYGGVGLGKTHLLIAIGNQIRENNKKAKICYYSSEKFMNEMINSLRYKKMDEFRNKFRKMDILLIDDIQFMAGKEATQEEFFHTFNALYESHKQIVVTSDKFPKDIPGLEERLRSRFEWGLIADIQPPDIETKIAILKKKSDLNSITLPNDVALFLASSATSNVRELEGMLIRLGAYASLTGSEISLNMARDILKDIIVEKTKDITVEMIQKHVADHFKIKVSELKSDKRLKTFVIPRQIAIYISRELTKASYPEIGERFGGKDHSTIIHSVKKIEKQMENDLEIKNTVEKMKKELMS</sequence>
<reference key="1">
    <citation type="submission" date="2009-01" db="EMBL/GenBank/DDBJ databases">
        <title>Complete sequence of Geobacter sp. FRC-32.</title>
        <authorList>
            <consortium name="US DOE Joint Genome Institute"/>
            <person name="Lucas S."/>
            <person name="Copeland A."/>
            <person name="Lapidus A."/>
            <person name="Glavina del Rio T."/>
            <person name="Dalin E."/>
            <person name="Tice H."/>
            <person name="Bruce D."/>
            <person name="Goodwin L."/>
            <person name="Pitluck S."/>
            <person name="Saunders E."/>
            <person name="Brettin T."/>
            <person name="Detter J.C."/>
            <person name="Han C."/>
            <person name="Larimer F."/>
            <person name="Land M."/>
            <person name="Hauser L."/>
            <person name="Kyrpides N."/>
            <person name="Ovchinnikova G."/>
            <person name="Kostka J."/>
            <person name="Richardson P."/>
        </authorList>
    </citation>
    <scope>NUCLEOTIDE SEQUENCE [LARGE SCALE GENOMIC DNA]</scope>
    <source>
        <strain>DSM 22248 / JCM 15807 / FRC-32</strain>
    </source>
</reference>
<dbReference type="EMBL" id="CP001390">
    <property type="protein sequence ID" value="ACM18379.1"/>
    <property type="molecule type" value="Genomic_DNA"/>
</dbReference>
<dbReference type="RefSeq" id="WP_012645108.1">
    <property type="nucleotide sequence ID" value="NC_011979.1"/>
</dbReference>
<dbReference type="SMR" id="B9M7S1"/>
<dbReference type="STRING" id="316067.Geob_0001"/>
<dbReference type="KEGG" id="geo:Geob_0001"/>
<dbReference type="eggNOG" id="COG0593">
    <property type="taxonomic scope" value="Bacteria"/>
</dbReference>
<dbReference type="HOGENOM" id="CLU_026910_3_1_7"/>
<dbReference type="OrthoDB" id="9807019at2"/>
<dbReference type="Proteomes" id="UP000007721">
    <property type="component" value="Chromosome"/>
</dbReference>
<dbReference type="GO" id="GO:0005737">
    <property type="term" value="C:cytoplasm"/>
    <property type="evidence" value="ECO:0007669"/>
    <property type="project" value="UniProtKB-SubCell"/>
</dbReference>
<dbReference type="GO" id="GO:0005886">
    <property type="term" value="C:plasma membrane"/>
    <property type="evidence" value="ECO:0007669"/>
    <property type="project" value="TreeGrafter"/>
</dbReference>
<dbReference type="GO" id="GO:0005524">
    <property type="term" value="F:ATP binding"/>
    <property type="evidence" value="ECO:0007669"/>
    <property type="project" value="UniProtKB-UniRule"/>
</dbReference>
<dbReference type="GO" id="GO:0016887">
    <property type="term" value="F:ATP hydrolysis activity"/>
    <property type="evidence" value="ECO:0007669"/>
    <property type="project" value="InterPro"/>
</dbReference>
<dbReference type="GO" id="GO:0003688">
    <property type="term" value="F:DNA replication origin binding"/>
    <property type="evidence" value="ECO:0007669"/>
    <property type="project" value="UniProtKB-UniRule"/>
</dbReference>
<dbReference type="GO" id="GO:0008289">
    <property type="term" value="F:lipid binding"/>
    <property type="evidence" value="ECO:0007669"/>
    <property type="project" value="UniProtKB-KW"/>
</dbReference>
<dbReference type="GO" id="GO:0006270">
    <property type="term" value="P:DNA replication initiation"/>
    <property type="evidence" value="ECO:0007669"/>
    <property type="project" value="UniProtKB-UniRule"/>
</dbReference>
<dbReference type="GO" id="GO:0006275">
    <property type="term" value="P:regulation of DNA replication"/>
    <property type="evidence" value="ECO:0007669"/>
    <property type="project" value="UniProtKB-UniRule"/>
</dbReference>
<dbReference type="CDD" id="cd00009">
    <property type="entry name" value="AAA"/>
    <property type="match status" value="1"/>
</dbReference>
<dbReference type="CDD" id="cd06571">
    <property type="entry name" value="Bac_DnaA_C"/>
    <property type="match status" value="1"/>
</dbReference>
<dbReference type="FunFam" id="1.10.8.60:FF:000003">
    <property type="entry name" value="Chromosomal replication initiator protein DnaA"/>
    <property type="match status" value="1"/>
</dbReference>
<dbReference type="FunFam" id="3.40.50.300:FF:000150">
    <property type="entry name" value="Chromosomal replication initiator protein DnaA"/>
    <property type="match status" value="1"/>
</dbReference>
<dbReference type="Gene3D" id="1.10.1750.10">
    <property type="match status" value="1"/>
</dbReference>
<dbReference type="Gene3D" id="1.10.8.60">
    <property type="match status" value="1"/>
</dbReference>
<dbReference type="Gene3D" id="3.30.300.180">
    <property type="match status" value="1"/>
</dbReference>
<dbReference type="Gene3D" id="3.40.50.300">
    <property type="entry name" value="P-loop containing nucleotide triphosphate hydrolases"/>
    <property type="match status" value="1"/>
</dbReference>
<dbReference type="HAMAP" id="MF_00377">
    <property type="entry name" value="DnaA_bact"/>
    <property type="match status" value="1"/>
</dbReference>
<dbReference type="InterPro" id="IPR003593">
    <property type="entry name" value="AAA+_ATPase"/>
</dbReference>
<dbReference type="InterPro" id="IPR001957">
    <property type="entry name" value="Chromosome_initiator_DnaA"/>
</dbReference>
<dbReference type="InterPro" id="IPR020591">
    <property type="entry name" value="Chromosome_initiator_DnaA-like"/>
</dbReference>
<dbReference type="InterPro" id="IPR018312">
    <property type="entry name" value="Chromosome_initiator_DnaA_CS"/>
</dbReference>
<dbReference type="InterPro" id="IPR013159">
    <property type="entry name" value="DnaA_C"/>
</dbReference>
<dbReference type="InterPro" id="IPR013317">
    <property type="entry name" value="DnaA_dom"/>
</dbReference>
<dbReference type="InterPro" id="IPR024633">
    <property type="entry name" value="DnaA_N_dom"/>
</dbReference>
<dbReference type="InterPro" id="IPR038454">
    <property type="entry name" value="DnaA_N_sf"/>
</dbReference>
<dbReference type="InterPro" id="IPR027417">
    <property type="entry name" value="P-loop_NTPase"/>
</dbReference>
<dbReference type="InterPro" id="IPR010921">
    <property type="entry name" value="Trp_repressor/repl_initiator"/>
</dbReference>
<dbReference type="NCBIfam" id="TIGR00362">
    <property type="entry name" value="DnaA"/>
    <property type="match status" value="1"/>
</dbReference>
<dbReference type="PANTHER" id="PTHR30050">
    <property type="entry name" value="CHROMOSOMAL REPLICATION INITIATOR PROTEIN DNAA"/>
    <property type="match status" value="1"/>
</dbReference>
<dbReference type="PANTHER" id="PTHR30050:SF2">
    <property type="entry name" value="CHROMOSOMAL REPLICATION INITIATOR PROTEIN DNAA"/>
    <property type="match status" value="1"/>
</dbReference>
<dbReference type="Pfam" id="PF00308">
    <property type="entry name" value="Bac_DnaA"/>
    <property type="match status" value="1"/>
</dbReference>
<dbReference type="Pfam" id="PF08299">
    <property type="entry name" value="Bac_DnaA_C"/>
    <property type="match status" value="1"/>
</dbReference>
<dbReference type="Pfam" id="PF11638">
    <property type="entry name" value="DnaA_N"/>
    <property type="match status" value="1"/>
</dbReference>
<dbReference type="PRINTS" id="PR00051">
    <property type="entry name" value="DNAA"/>
</dbReference>
<dbReference type="SMART" id="SM00382">
    <property type="entry name" value="AAA"/>
    <property type="match status" value="1"/>
</dbReference>
<dbReference type="SMART" id="SM00760">
    <property type="entry name" value="Bac_DnaA_C"/>
    <property type="match status" value="1"/>
</dbReference>
<dbReference type="SUPFAM" id="SSF52540">
    <property type="entry name" value="P-loop containing nucleoside triphosphate hydrolases"/>
    <property type="match status" value="1"/>
</dbReference>
<dbReference type="SUPFAM" id="SSF48295">
    <property type="entry name" value="TrpR-like"/>
    <property type="match status" value="1"/>
</dbReference>
<dbReference type="PROSITE" id="PS01008">
    <property type="entry name" value="DNAA"/>
    <property type="match status" value="1"/>
</dbReference>
<keyword id="KW-0067">ATP-binding</keyword>
<keyword id="KW-0963">Cytoplasm</keyword>
<keyword id="KW-0235">DNA replication</keyword>
<keyword id="KW-0238">DNA-binding</keyword>
<keyword id="KW-0446">Lipid-binding</keyword>
<keyword id="KW-0547">Nucleotide-binding</keyword>
<keyword id="KW-1185">Reference proteome</keyword>
<evidence type="ECO:0000255" key="1">
    <source>
        <dbReference type="HAMAP-Rule" id="MF_00377"/>
    </source>
</evidence>
<accession>B9M7S1</accession>
<gene>
    <name evidence="1" type="primary">dnaA</name>
    <name type="ordered locus">Geob_0001</name>
</gene>
<comment type="function">
    <text evidence="1">Plays an essential role in the initiation and regulation of chromosomal replication. ATP-DnaA binds to the origin of replication (oriC) to initiate formation of the DNA replication initiation complex once per cell cycle. Binds the DnaA box (a 9 base pair repeat at the origin) and separates the double-stranded (ds)DNA. Forms a right-handed helical filament on oriC DNA; dsDNA binds to the exterior of the filament while single-stranded (ss)DNA is stabiized in the filament's interior. The ATP-DnaA-oriC complex binds and stabilizes one strand of the AT-rich DNA unwinding element (DUE), permitting loading of DNA polymerase. After initiation quickly degrades to an ADP-DnaA complex that is not apt for DNA replication. Binds acidic phospholipids.</text>
</comment>
<comment type="subunit">
    <text evidence="1">Oligomerizes as a right-handed, spiral filament on DNA at oriC.</text>
</comment>
<comment type="subcellular location">
    <subcellularLocation>
        <location evidence="1">Cytoplasm</location>
    </subcellularLocation>
</comment>
<comment type="domain">
    <text evidence="1">Domain I is involved in oligomerization and binding regulators, domain II is flexibile and of varying length in different bacteria, domain III forms the AAA+ region, while domain IV binds dsDNA.</text>
</comment>
<comment type="similarity">
    <text evidence="1">Belongs to the DnaA family.</text>
</comment>
<protein>
    <recommendedName>
        <fullName evidence="1">Chromosomal replication initiator protein DnaA</fullName>
    </recommendedName>
</protein>
<proteinExistence type="inferred from homology"/>
<organism>
    <name type="scientific">Geotalea daltonii (strain DSM 22248 / JCM 15807 / FRC-32)</name>
    <name type="common">Geobacter daltonii</name>
    <dbReference type="NCBI Taxonomy" id="316067"/>
    <lineage>
        <taxon>Bacteria</taxon>
        <taxon>Pseudomonadati</taxon>
        <taxon>Thermodesulfobacteriota</taxon>
        <taxon>Desulfuromonadia</taxon>
        <taxon>Geobacterales</taxon>
        <taxon>Geobacteraceae</taxon>
        <taxon>Geotalea</taxon>
    </lineage>
</organism>